<accession>B1J0Z1</accession>
<keyword id="KW-0028">Amino-acid biosynthesis</keyword>
<keyword id="KW-0963">Cytoplasm</keyword>
<keyword id="KW-0521">NADP</keyword>
<keyword id="KW-0560">Oxidoreductase</keyword>
<keyword id="KW-0641">Proline biosynthesis</keyword>
<name>PROA_ECOLC</name>
<protein>
    <recommendedName>
        <fullName evidence="1">Gamma-glutamyl phosphate reductase</fullName>
        <shortName evidence="1">GPR</shortName>
        <ecNumber evidence="1">1.2.1.41</ecNumber>
    </recommendedName>
    <alternativeName>
        <fullName evidence="1">Glutamate-5-semialdehyde dehydrogenase</fullName>
    </alternativeName>
    <alternativeName>
        <fullName evidence="1">Glutamyl-gamma-semialdehyde dehydrogenase</fullName>
        <shortName evidence="1">GSA dehydrogenase</shortName>
    </alternativeName>
</protein>
<sequence>MLEQMGIAAKQASYKLAQLSSREKNRVLEKIADELEAQSEIILNANAQDVADARANGLSEAMLDRLALTPARLKGIADDVRQVCNLADPVGQVIDGGVLDSGLRLERRRVPLGVIGVIYEARPNVTVDVASLCLKTGNAVILRGGKETCRTNAATVAVIQDALKSCGLPAGAVQAIDNPDRALVSEMLRMDKYIDMLIPRGGAGLHKLCREQSTIPVITGGIGVCHIYVDESVEIAEALKVIVNAKTQRPSTCNTVETLLVNKNIADSFLPALSKQMAESGVTLHADAAALAQLQAGPAKVVAVKAEEYDDEFLSLDLNVKIVSDLDDAIAHIREHGTQHSDAILTRDMRNAQRFVNEVDSSAVYVNASTRFTDGGQFGLGAEVAVSTQKLHARGPMGLEALTTYKWIGIGDYTIRA</sequence>
<evidence type="ECO:0000255" key="1">
    <source>
        <dbReference type="HAMAP-Rule" id="MF_00412"/>
    </source>
</evidence>
<comment type="function">
    <text evidence="1">Catalyzes the NADPH-dependent reduction of L-glutamate 5-phosphate into L-glutamate 5-semialdehyde and phosphate. The product spontaneously undergoes cyclization to form 1-pyrroline-5-carboxylate.</text>
</comment>
<comment type="catalytic activity">
    <reaction evidence="1">
        <text>L-glutamate 5-semialdehyde + phosphate + NADP(+) = L-glutamyl 5-phosphate + NADPH + H(+)</text>
        <dbReference type="Rhea" id="RHEA:19541"/>
        <dbReference type="ChEBI" id="CHEBI:15378"/>
        <dbReference type="ChEBI" id="CHEBI:43474"/>
        <dbReference type="ChEBI" id="CHEBI:57783"/>
        <dbReference type="ChEBI" id="CHEBI:58066"/>
        <dbReference type="ChEBI" id="CHEBI:58274"/>
        <dbReference type="ChEBI" id="CHEBI:58349"/>
        <dbReference type="EC" id="1.2.1.41"/>
    </reaction>
</comment>
<comment type="pathway">
    <text evidence="1">Amino-acid biosynthesis; L-proline biosynthesis; L-glutamate 5-semialdehyde from L-glutamate: step 2/2.</text>
</comment>
<comment type="subcellular location">
    <subcellularLocation>
        <location evidence="1">Cytoplasm</location>
    </subcellularLocation>
</comment>
<comment type="similarity">
    <text evidence="1">Belongs to the gamma-glutamyl phosphate reductase family.</text>
</comment>
<gene>
    <name evidence="1" type="primary">proA</name>
    <name type="ordered locus">EcolC_3338</name>
</gene>
<feature type="chain" id="PRO_1000080483" description="Gamma-glutamyl phosphate reductase">
    <location>
        <begin position="1"/>
        <end position="417"/>
    </location>
</feature>
<reference key="1">
    <citation type="submission" date="2008-02" db="EMBL/GenBank/DDBJ databases">
        <title>Complete sequence of Escherichia coli C str. ATCC 8739.</title>
        <authorList>
            <person name="Copeland A."/>
            <person name="Lucas S."/>
            <person name="Lapidus A."/>
            <person name="Glavina del Rio T."/>
            <person name="Dalin E."/>
            <person name="Tice H."/>
            <person name="Bruce D."/>
            <person name="Goodwin L."/>
            <person name="Pitluck S."/>
            <person name="Kiss H."/>
            <person name="Brettin T."/>
            <person name="Detter J.C."/>
            <person name="Han C."/>
            <person name="Kuske C.R."/>
            <person name="Schmutz J."/>
            <person name="Larimer F."/>
            <person name="Land M."/>
            <person name="Hauser L."/>
            <person name="Kyrpides N."/>
            <person name="Mikhailova N."/>
            <person name="Ingram L."/>
            <person name="Richardson P."/>
        </authorList>
    </citation>
    <scope>NUCLEOTIDE SEQUENCE [LARGE SCALE GENOMIC DNA]</scope>
    <source>
        <strain>ATCC 8739 / DSM 1576 / NBRC 3972 / NCIMB 8545 / WDCM 00012 / Crooks</strain>
    </source>
</reference>
<organism>
    <name type="scientific">Escherichia coli (strain ATCC 8739 / DSM 1576 / NBRC 3972 / NCIMB 8545 / WDCM 00012 / Crooks)</name>
    <dbReference type="NCBI Taxonomy" id="481805"/>
    <lineage>
        <taxon>Bacteria</taxon>
        <taxon>Pseudomonadati</taxon>
        <taxon>Pseudomonadota</taxon>
        <taxon>Gammaproteobacteria</taxon>
        <taxon>Enterobacterales</taxon>
        <taxon>Enterobacteriaceae</taxon>
        <taxon>Escherichia</taxon>
    </lineage>
</organism>
<proteinExistence type="inferred from homology"/>
<dbReference type="EC" id="1.2.1.41" evidence="1"/>
<dbReference type="EMBL" id="CP000946">
    <property type="protein sequence ID" value="ACA78959.1"/>
    <property type="molecule type" value="Genomic_DNA"/>
</dbReference>
<dbReference type="RefSeq" id="WP_000893278.1">
    <property type="nucleotide sequence ID" value="NZ_MTFT01000010.1"/>
</dbReference>
<dbReference type="SMR" id="B1J0Z1"/>
<dbReference type="GeneID" id="93777150"/>
<dbReference type="KEGG" id="ecl:EcolC_3338"/>
<dbReference type="HOGENOM" id="CLU_030231_0_0_6"/>
<dbReference type="UniPathway" id="UPA00098">
    <property type="reaction ID" value="UER00360"/>
</dbReference>
<dbReference type="GO" id="GO:0005737">
    <property type="term" value="C:cytoplasm"/>
    <property type="evidence" value="ECO:0007669"/>
    <property type="project" value="UniProtKB-SubCell"/>
</dbReference>
<dbReference type="GO" id="GO:0004350">
    <property type="term" value="F:glutamate-5-semialdehyde dehydrogenase activity"/>
    <property type="evidence" value="ECO:0007669"/>
    <property type="project" value="UniProtKB-UniRule"/>
</dbReference>
<dbReference type="GO" id="GO:0050661">
    <property type="term" value="F:NADP binding"/>
    <property type="evidence" value="ECO:0007669"/>
    <property type="project" value="InterPro"/>
</dbReference>
<dbReference type="GO" id="GO:0055129">
    <property type="term" value="P:L-proline biosynthetic process"/>
    <property type="evidence" value="ECO:0007669"/>
    <property type="project" value="UniProtKB-UniRule"/>
</dbReference>
<dbReference type="CDD" id="cd07079">
    <property type="entry name" value="ALDH_F18-19_ProA-GPR"/>
    <property type="match status" value="1"/>
</dbReference>
<dbReference type="FunFam" id="3.40.309.10:FF:000006">
    <property type="entry name" value="Gamma-glutamyl phosphate reductase"/>
    <property type="match status" value="1"/>
</dbReference>
<dbReference type="Gene3D" id="3.40.605.10">
    <property type="entry name" value="Aldehyde Dehydrogenase, Chain A, domain 1"/>
    <property type="match status" value="1"/>
</dbReference>
<dbReference type="Gene3D" id="3.40.309.10">
    <property type="entry name" value="Aldehyde Dehydrogenase, Chain A, domain 2"/>
    <property type="match status" value="1"/>
</dbReference>
<dbReference type="HAMAP" id="MF_00412">
    <property type="entry name" value="ProA"/>
    <property type="match status" value="1"/>
</dbReference>
<dbReference type="InterPro" id="IPR016161">
    <property type="entry name" value="Ald_DH/histidinol_DH"/>
</dbReference>
<dbReference type="InterPro" id="IPR016163">
    <property type="entry name" value="Ald_DH_C"/>
</dbReference>
<dbReference type="InterPro" id="IPR016162">
    <property type="entry name" value="Ald_DH_N"/>
</dbReference>
<dbReference type="InterPro" id="IPR015590">
    <property type="entry name" value="Aldehyde_DH_dom"/>
</dbReference>
<dbReference type="InterPro" id="IPR020593">
    <property type="entry name" value="G-glutamylP_reductase_CS"/>
</dbReference>
<dbReference type="InterPro" id="IPR012134">
    <property type="entry name" value="Glu-5-SA_DH"/>
</dbReference>
<dbReference type="InterPro" id="IPR000965">
    <property type="entry name" value="GPR_dom"/>
</dbReference>
<dbReference type="NCBIfam" id="NF001221">
    <property type="entry name" value="PRK00197.1"/>
    <property type="match status" value="1"/>
</dbReference>
<dbReference type="NCBIfam" id="TIGR00407">
    <property type="entry name" value="proA"/>
    <property type="match status" value="1"/>
</dbReference>
<dbReference type="PANTHER" id="PTHR11063:SF8">
    <property type="entry name" value="DELTA-1-PYRROLINE-5-CARBOXYLATE SYNTHASE"/>
    <property type="match status" value="1"/>
</dbReference>
<dbReference type="PANTHER" id="PTHR11063">
    <property type="entry name" value="GLUTAMATE SEMIALDEHYDE DEHYDROGENASE"/>
    <property type="match status" value="1"/>
</dbReference>
<dbReference type="Pfam" id="PF00171">
    <property type="entry name" value="Aldedh"/>
    <property type="match status" value="1"/>
</dbReference>
<dbReference type="PIRSF" id="PIRSF000151">
    <property type="entry name" value="GPR"/>
    <property type="match status" value="1"/>
</dbReference>
<dbReference type="SUPFAM" id="SSF53720">
    <property type="entry name" value="ALDH-like"/>
    <property type="match status" value="1"/>
</dbReference>
<dbReference type="PROSITE" id="PS01223">
    <property type="entry name" value="PROA"/>
    <property type="match status" value="1"/>
</dbReference>